<sequence length="167" mass="18655">MRCGPLCRFLWLWPYLSCVEAVPIRKVQDDTKTLIKTIVARINDISHTQSVSSKQRVAGLDFIPGLQPVLSLSRMDQTLAIYQQILNSLHSRNVVQISNDLENLRDLLHLLASSKSCPLPRARGLETFESLGGVLEASLYSTEVVALNRLQAALQDMLRRLDLSPGC</sequence>
<name>LEP_CANLF</name>
<accession>O02720</accession>
<accession>Q9TSG1</accession>
<proteinExistence type="evidence at transcript level"/>
<evidence type="ECO:0000250" key="1"/>
<evidence type="ECO:0000250" key="2">
    <source>
        <dbReference type="UniProtKB" id="P41159"/>
    </source>
</evidence>
<evidence type="ECO:0000250" key="3">
    <source>
        <dbReference type="UniProtKB" id="P41160"/>
    </source>
</evidence>
<evidence type="ECO:0000250" key="4">
    <source>
        <dbReference type="UniProtKB" id="P50596"/>
    </source>
</evidence>
<evidence type="ECO:0000255" key="5"/>
<evidence type="ECO:0000305" key="6"/>
<gene>
    <name type="primary">LEP</name>
    <name type="synonym">OB</name>
</gene>
<feature type="signal peptide" evidence="5">
    <location>
        <begin position="1"/>
        <end position="21"/>
    </location>
</feature>
<feature type="chain" id="PRO_0000017681" description="Leptin">
    <location>
        <begin position="22"/>
        <end position="167"/>
    </location>
</feature>
<feature type="disulfide bond" evidence="1">
    <location>
        <begin position="117"/>
        <end position="167"/>
    </location>
</feature>
<feature type="sequence conflict" description="In Ref. 2; AAB53654." evidence="6" ref="2">
    <original>N</original>
    <variation>S</variation>
    <location>
        <position position="148"/>
    </location>
</feature>
<comment type="function">
    <text evidence="2 3 4">Key player in the regulation of energy balance and body weight control. Once released into the circulation, has central and peripheral effects by binding LEPR, found in many tissues, which results in the activation of several major signaling pathways (By similarity). In the hypothalamus, acts as an appetite-regulating factor that induces a decrease in food intake and an increase in energy consumption by inducing anorexinogenic factors and suppressing orexigenic neuropeptides, also regulates bone mass and secretion of hypothalamo-pituitary-adrenal hormones. In the periphery, increases basal metabolism, influences reproductive function, regulates pancreatic beta-cell function and insulin secretion, is pro-angiogenic for endothelial cell and affects innate and adaptive immunity (By similarity). In the arcuate nucleus of the hypothalamus, activates by depolarization POMC neurons inducing FOS and SOCS3 expression to release anorexigenic peptides and inhibits by hyperpolarization NPY neurons inducing SOCS3 with a consequent reduction on release of orexigenic peptides (By similarity). In addition to its known satiety inducing effect, has a modulatory role in nutrient absorption. In the intestine, reduces glucose absorption by enterocytes by activating PKC and leading to a sequential activation of p38, PI3K and ERK signaling pathways which exerts an inhibitory effect on glucose absorption (By similarity). Acts as a growth factor on certain tissues, through the activation of different signaling pathways increases expression of genes involved in cell cycle regulation such as CCND1, via JAK2-STAT3 pathway, or VEGFA, via MAPK1/3 and PI3K-AKT1 pathways (By similarity). May also play an apoptotic role via JAK2-STAT3 pathway and up-regulation of BIRC5 expression. Pro-angiogenic, has mitogenic activity on vascular endothelial cells and plays a role in matrix remodeling by regulating the expression of matrix metalloproteinases (MMPs) and tissue inhibitors of metalloproteinases (TIMPs). In innate immunity, modulates the activity and function of neutrophils by increasing chemotaxis and the secretion of oxygen radicals. Increases phagocytosis by macrophages and enhances secretion of pro-inflammatory mediators. Increases cytotoxic ability of NK cells. Plays a pro-inflammatory role, in synergy with IL1B, by inducing NOS2 which promotes the production of IL6, IL8 and Prostaglandin E2, through a signaling pathway that involves JAK2, PI3K, MAP2K1/MEK1 and MAPK14/p38 (By similarity). In adaptive immunity, promotes the switch of memory T-cells towards T helper-1 cell immune responses (By similarity). Increases CD4(+)CD25(-) T-cell proliferation and reduces autophagy during TCR (T-cell receptor) stimulation, through MTOR signaling pathway activation and BCL2 up-regulation (By similarity).</text>
</comment>
<comment type="subcellular location">
    <subcellularLocation>
        <location evidence="2">Secreted</location>
    </subcellularLocation>
</comment>
<comment type="similarity">
    <text evidence="6">Belongs to the leptin family.</text>
</comment>
<organism>
    <name type="scientific">Canis lupus familiaris</name>
    <name type="common">Dog</name>
    <name type="synonym">Canis familiaris</name>
    <dbReference type="NCBI Taxonomy" id="9615"/>
    <lineage>
        <taxon>Eukaryota</taxon>
        <taxon>Metazoa</taxon>
        <taxon>Chordata</taxon>
        <taxon>Craniata</taxon>
        <taxon>Vertebrata</taxon>
        <taxon>Euteleostomi</taxon>
        <taxon>Mammalia</taxon>
        <taxon>Eutheria</taxon>
        <taxon>Laurasiatheria</taxon>
        <taxon>Carnivora</taxon>
        <taxon>Caniformia</taxon>
        <taxon>Canidae</taxon>
        <taxon>Canis</taxon>
    </lineage>
</organism>
<keyword id="KW-1015">Disulfide bond</keyword>
<keyword id="KW-0550">Obesity</keyword>
<keyword id="KW-1185">Reference proteome</keyword>
<keyword id="KW-0964">Secreted</keyword>
<keyword id="KW-0732">Signal</keyword>
<protein>
    <recommendedName>
        <fullName>Leptin</fullName>
    </recommendedName>
    <alternativeName>
        <fullName>Obesity factor</fullName>
    </alternativeName>
</protein>
<dbReference type="EMBL" id="AB020986">
    <property type="protein sequence ID" value="BAA35129.1"/>
    <property type="molecule type" value="mRNA"/>
</dbReference>
<dbReference type="EMBL" id="U95642">
    <property type="protein sequence ID" value="AAB53654.1"/>
    <property type="molecule type" value="mRNA"/>
</dbReference>
<dbReference type="RefSeq" id="NP_001003070.1">
    <property type="nucleotide sequence ID" value="NM_001003070.1"/>
</dbReference>
<dbReference type="SMR" id="O02720"/>
<dbReference type="FunCoup" id="O02720">
    <property type="interactions" value="35"/>
</dbReference>
<dbReference type="STRING" id="9615.ENSCAFP00000002433"/>
<dbReference type="PaxDb" id="9612-ENSCAFP00000002433"/>
<dbReference type="GeneID" id="403616"/>
<dbReference type="KEGG" id="cfa:403616"/>
<dbReference type="CTD" id="3952"/>
<dbReference type="eggNOG" id="ENOG502S5K5">
    <property type="taxonomic scope" value="Eukaryota"/>
</dbReference>
<dbReference type="InParanoid" id="O02720"/>
<dbReference type="OrthoDB" id="9872512at2759"/>
<dbReference type="Proteomes" id="UP000002254">
    <property type="component" value="Unplaced"/>
</dbReference>
<dbReference type="Proteomes" id="UP000694429">
    <property type="component" value="Unplaced"/>
</dbReference>
<dbReference type="Proteomes" id="UP000694542">
    <property type="component" value="Unplaced"/>
</dbReference>
<dbReference type="Proteomes" id="UP000805418">
    <property type="component" value="Unplaced"/>
</dbReference>
<dbReference type="GO" id="GO:0005615">
    <property type="term" value="C:extracellular space"/>
    <property type="evidence" value="ECO:0000250"/>
    <property type="project" value="HGNC-UCL"/>
</dbReference>
<dbReference type="GO" id="GO:0005179">
    <property type="term" value="F:hormone activity"/>
    <property type="evidence" value="ECO:0000318"/>
    <property type="project" value="GO_Central"/>
</dbReference>
<dbReference type="GO" id="GO:0051428">
    <property type="term" value="F:peptide hormone receptor binding"/>
    <property type="evidence" value="ECO:0000318"/>
    <property type="project" value="GO_Central"/>
</dbReference>
<dbReference type="GO" id="GO:1990051">
    <property type="term" value="P:activation of protein kinase C activity"/>
    <property type="evidence" value="ECO:0000250"/>
    <property type="project" value="UniProtKB"/>
</dbReference>
<dbReference type="GO" id="GO:0008343">
    <property type="term" value="P:adult feeding behavior"/>
    <property type="evidence" value="ECO:0000250"/>
    <property type="project" value="HGNC-UCL"/>
</dbReference>
<dbReference type="GO" id="GO:0098868">
    <property type="term" value="P:bone growth"/>
    <property type="evidence" value="ECO:0000250"/>
    <property type="project" value="UniProtKB"/>
</dbReference>
<dbReference type="GO" id="GO:0044320">
    <property type="term" value="P:cellular response to leptin stimulus"/>
    <property type="evidence" value="ECO:0000250"/>
    <property type="project" value="UniProtKB"/>
</dbReference>
<dbReference type="GO" id="GO:0006112">
    <property type="term" value="P:energy reserve metabolic process"/>
    <property type="evidence" value="ECO:0000318"/>
    <property type="project" value="GO_Central"/>
</dbReference>
<dbReference type="GO" id="GO:0050892">
    <property type="term" value="P:intestinal absorption"/>
    <property type="evidence" value="ECO:0000250"/>
    <property type="project" value="UniProtKB"/>
</dbReference>
<dbReference type="GO" id="GO:0033210">
    <property type="term" value="P:leptin-mediated signaling pathway"/>
    <property type="evidence" value="ECO:0000250"/>
    <property type="project" value="UniProtKB"/>
</dbReference>
<dbReference type="GO" id="GO:0006629">
    <property type="term" value="P:lipid metabolic process"/>
    <property type="evidence" value="ECO:0000318"/>
    <property type="project" value="GO_Central"/>
</dbReference>
<dbReference type="GO" id="GO:0032099">
    <property type="term" value="P:negative regulation of appetite"/>
    <property type="evidence" value="ECO:0000250"/>
    <property type="project" value="HGNC-UCL"/>
</dbReference>
<dbReference type="GO" id="GO:0038108">
    <property type="term" value="P:negative regulation of appetite by leptin-mediated signaling pathway"/>
    <property type="evidence" value="ECO:0000250"/>
    <property type="project" value="UniProtKB"/>
</dbReference>
<dbReference type="GO" id="GO:0010507">
    <property type="term" value="P:negative regulation of autophagy"/>
    <property type="evidence" value="ECO:0000250"/>
    <property type="project" value="UniProtKB"/>
</dbReference>
<dbReference type="GO" id="GO:0046325">
    <property type="term" value="P:negative regulation of D-glucose import"/>
    <property type="evidence" value="ECO:0000250"/>
    <property type="project" value="UniProtKB"/>
</dbReference>
<dbReference type="GO" id="GO:0006909">
    <property type="term" value="P:phagocytosis"/>
    <property type="evidence" value="ECO:0000250"/>
    <property type="project" value="UniProtKB"/>
</dbReference>
<dbReference type="GO" id="GO:0032735">
    <property type="term" value="P:positive regulation of interleukin-12 production"/>
    <property type="evidence" value="ECO:0000250"/>
    <property type="project" value="UniProtKB"/>
</dbReference>
<dbReference type="GO" id="GO:0032755">
    <property type="term" value="P:positive regulation of interleukin-6 production"/>
    <property type="evidence" value="ECO:0000250"/>
    <property type="project" value="UniProtKB"/>
</dbReference>
<dbReference type="GO" id="GO:0032757">
    <property type="term" value="P:positive regulation of interleukin-8 production"/>
    <property type="evidence" value="ECO:0000250"/>
    <property type="project" value="UniProtKB"/>
</dbReference>
<dbReference type="GO" id="GO:0043410">
    <property type="term" value="P:positive regulation of MAPK cascade"/>
    <property type="evidence" value="ECO:0000250"/>
    <property type="project" value="UniProtKB"/>
</dbReference>
<dbReference type="GO" id="GO:1900745">
    <property type="term" value="P:positive regulation of p38MAPK cascade"/>
    <property type="evidence" value="ECO:0000250"/>
    <property type="project" value="UniProtKB"/>
</dbReference>
<dbReference type="GO" id="GO:0051897">
    <property type="term" value="P:positive regulation of phosphatidylinositol 3-kinase/protein kinase B signal transduction"/>
    <property type="evidence" value="ECO:0000250"/>
    <property type="project" value="UniProtKB"/>
</dbReference>
<dbReference type="GO" id="GO:0046427">
    <property type="term" value="P:positive regulation of receptor signaling pathway via JAK-STAT"/>
    <property type="evidence" value="ECO:0000250"/>
    <property type="project" value="UniProtKB"/>
</dbReference>
<dbReference type="GO" id="GO:0042102">
    <property type="term" value="P:positive regulation of T cell proliferation"/>
    <property type="evidence" value="ECO:0000250"/>
    <property type="project" value="UniProtKB"/>
</dbReference>
<dbReference type="GO" id="GO:0032008">
    <property type="term" value="P:positive regulation of TOR signaling"/>
    <property type="evidence" value="ECO:0000250"/>
    <property type="project" value="UniProtKB"/>
</dbReference>
<dbReference type="GO" id="GO:0032760">
    <property type="term" value="P:positive regulation of tumor necrosis factor production"/>
    <property type="evidence" value="ECO:0000250"/>
    <property type="project" value="UniProtKB"/>
</dbReference>
<dbReference type="GO" id="GO:0032310">
    <property type="term" value="P:prostaglandin secretion"/>
    <property type="evidence" value="ECO:0000250"/>
    <property type="project" value="UniProtKB"/>
</dbReference>
<dbReference type="GO" id="GO:0045765">
    <property type="term" value="P:regulation of angiogenesis"/>
    <property type="evidence" value="ECO:0000250"/>
    <property type="project" value="UniProtKB"/>
</dbReference>
<dbReference type="GO" id="GO:0046850">
    <property type="term" value="P:regulation of bone remodeling"/>
    <property type="evidence" value="ECO:0000250"/>
    <property type="project" value="UniProtKB"/>
</dbReference>
<dbReference type="GO" id="GO:0090335">
    <property type="term" value="P:regulation of brown fat cell differentiation"/>
    <property type="evidence" value="ECO:0000250"/>
    <property type="project" value="UniProtKB"/>
</dbReference>
<dbReference type="GO" id="GO:0051726">
    <property type="term" value="P:regulation of cell cycle"/>
    <property type="evidence" value="ECO:0000250"/>
    <property type="project" value="UniProtKB"/>
</dbReference>
<dbReference type="GO" id="GO:1900015">
    <property type="term" value="P:regulation of cytokine production involved in inflammatory response"/>
    <property type="evidence" value="ECO:0000250"/>
    <property type="project" value="UniProtKB"/>
</dbReference>
<dbReference type="GO" id="GO:0001936">
    <property type="term" value="P:regulation of endothelial cell proliferation"/>
    <property type="evidence" value="ECO:0000250"/>
    <property type="project" value="UniProtKB"/>
</dbReference>
<dbReference type="GO" id="GO:0032814">
    <property type="term" value="P:regulation of natural killer cell activation"/>
    <property type="evidence" value="ECO:0000250"/>
    <property type="project" value="UniProtKB"/>
</dbReference>
<dbReference type="GO" id="GO:0042269">
    <property type="term" value="P:regulation of natural killer cell mediated cytotoxicity"/>
    <property type="evidence" value="ECO:0000250"/>
    <property type="project" value="UniProtKB"/>
</dbReference>
<dbReference type="GO" id="GO:0032817">
    <property type="term" value="P:regulation of natural killer cell proliferation"/>
    <property type="evidence" value="ECO:0000250"/>
    <property type="project" value="UniProtKB"/>
</dbReference>
<dbReference type="GO" id="GO:0050999">
    <property type="term" value="P:regulation of nitric-oxide synthase activity"/>
    <property type="evidence" value="ECO:0000250"/>
    <property type="project" value="UniProtKB"/>
</dbReference>
<dbReference type="GO" id="GO:0032868">
    <property type="term" value="P:response to insulin"/>
    <property type="evidence" value="ECO:0000318"/>
    <property type="project" value="GO_Central"/>
</dbReference>
<dbReference type="GO" id="GO:0019953">
    <property type="term" value="P:sexual reproduction"/>
    <property type="evidence" value="ECO:0000250"/>
    <property type="project" value="UniProtKB"/>
</dbReference>
<dbReference type="GO" id="GO:0030217">
    <property type="term" value="P:T cell differentiation"/>
    <property type="evidence" value="ECO:0000250"/>
    <property type="project" value="UniProtKB"/>
</dbReference>
<dbReference type="FunFam" id="1.20.1250.10:FF:000008">
    <property type="entry name" value="Leptin"/>
    <property type="match status" value="1"/>
</dbReference>
<dbReference type="Gene3D" id="1.20.1250.10">
    <property type="match status" value="1"/>
</dbReference>
<dbReference type="InterPro" id="IPR009079">
    <property type="entry name" value="4_helix_cytokine-like_core"/>
</dbReference>
<dbReference type="InterPro" id="IPR000065">
    <property type="entry name" value="Leptin"/>
</dbReference>
<dbReference type="PANTHER" id="PTHR11724">
    <property type="entry name" value="LEPTIN"/>
    <property type="match status" value="1"/>
</dbReference>
<dbReference type="PANTHER" id="PTHR11724:SF1">
    <property type="entry name" value="LEPTIN"/>
    <property type="match status" value="1"/>
</dbReference>
<dbReference type="Pfam" id="PF02024">
    <property type="entry name" value="Leptin"/>
    <property type="match status" value="1"/>
</dbReference>
<dbReference type="PIRSF" id="PIRSF001837">
    <property type="entry name" value="Leptin"/>
    <property type="match status" value="1"/>
</dbReference>
<dbReference type="PRINTS" id="PR00495">
    <property type="entry name" value="LEPTIN"/>
</dbReference>
<dbReference type="SUPFAM" id="SSF47266">
    <property type="entry name" value="4-helical cytokines"/>
    <property type="match status" value="1"/>
</dbReference>
<reference key="1">
    <citation type="submission" date="1998-12" db="EMBL/GenBank/DDBJ databases">
        <title>Molecular cloning of canine leptin cDNA.</title>
        <authorList>
            <person name="Iwase M."/>
            <person name="Sasaki N."/>
            <person name="Komagome R."/>
            <person name="Kimura K."/>
            <person name="Saito M."/>
        </authorList>
    </citation>
    <scope>NUCLEOTIDE SEQUENCE [MRNA]</scope>
    <source>
        <tissue>White adipose tissue</tissue>
    </source>
</reference>
<reference key="2">
    <citation type="submission" date="1997-03" db="EMBL/GenBank/DDBJ databases">
        <authorList>
            <person name="Smith D.P."/>
            <person name="Zhang X."/>
            <person name="Hsiung H.M."/>
        </authorList>
    </citation>
    <scope>NUCLEOTIDE SEQUENCE [MRNA] OF 22-167</scope>
    <source>
        <tissue>Adipose tissue</tissue>
    </source>
</reference>